<reference key="1">
    <citation type="journal article" date="2004" name="Genome Res.">
        <title>The status, quality, and expansion of the NIH full-length cDNA project: the Mammalian Gene Collection (MGC).</title>
        <authorList>
            <consortium name="The MGC Project Team"/>
        </authorList>
    </citation>
    <scope>NUCLEOTIDE SEQUENCE [LARGE SCALE MRNA]</scope>
    <source>
        <tissue>Placenta</tissue>
    </source>
</reference>
<reference key="2">
    <citation type="journal article" date="2012" name="Nat. Commun.">
        <title>Quantitative maps of protein phosphorylation sites across 14 different rat organs and tissues.</title>
        <authorList>
            <person name="Lundby A."/>
            <person name="Secher A."/>
            <person name="Lage K."/>
            <person name="Nordsborg N.B."/>
            <person name="Dmytriyev A."/>
            <person name="Lundby C."/>
            <person name="Olsen J.V."/>
        </authorList>
    </citation>
    <scope>PHOSPHORYLATION [LARGE SCALE ANALYSIS] AT SER-655</scope>
    <scope>IDENTIFICATION BY MASS SPECTROMETRY [LARGE SCALE ANALYSIS]</scope>
</reference>
<reference key="3">
    <citation type="journal article" date="2012" name="J. Biol. Chem.">
        <title>Sh3rf2/POSHER protein promotes cell survival by RING-mediated proteasomal degradation of the c-Jun N-terminal kinase scaffold POSH (Plenty of SH3s) protein.</title>
        <authorList>
            <person name="Wilhelm M."/>
            <person name="Kukekov N.V."/>
            <person name="Schmit T.L."/>
            <person name="Biagas K.V."/>
            <person name="Sproul A.A."/>
            <person name="Gire S."/>
            <person name="Maes M.E."/>
            <person name="Xu Z."/>
            <person name="Greene L.A."/>
        </authorList>
    </citation>
    <scope>FUNCTION AS AN E3 UBIQUITIN-PROTEIN LIGASE</scope>
    <scope>INTERACTION WITH DLK1; MAP3K10; MAPK8IP1; MAPK8IP2; MAPK8IP3; RAC1 AND SH3RF1</scope>
</reference>
<gene>
    <name type="primary">Sh3rf2</name>
    <name type="synonym">Posh3</name>
    <name evidence="7" type="synonym">Posher</name>
    <name type="synonym">Ppp1r39</name>
    <name type="synonym">Rnf158</name>
</gene>
<accession>Q498M5</accession>
<dbReference type="EC" id="2.3.2.27" evidence="2"/>
<dbReference type="EMBL" id="BC100155">
    <property type="protein sequence ID" value="AAI00156.1"/>
    <property type="molecule type" value="mRNA"/>
</dbReference>
<dbReference type="RefSeq" id="NP_001029359.1">
    <property type="nucleotide sequence ID" value="NM_001034187.2"/>
</dbReference>
<dbReference type="RefSeq" id="XP_038952781.1">
    <property type="nucleotide sequence ID" value="XM_039096853.2"/>
</dbReference>
<dbReference type="SMR" id="Q498M5"/>
<dbReference type="FunCoup" id="Q498M5">
    <property type="interactions" value="53"/>
</dbReference>
<dbReference type="STRING" id="10116.ENSRNOP00000025409"/>
<dbReference type="GlyGen" id="Q498M5">
    <property type="glycosylation" value="2 sites"/>
</dbReference>
<dbReference type="iPTMnet" id="Q498M5"/>
<dbReference type="PhosphoSitePlus" id="Q498M5"/>
<dbReference type="PaxDb" id="10116-ENSRNOP00000025409"/>
<dbReference type="Ensembl" id="ENSRNOT00000025408.7">
    <property type="protein sequence ID" value="ENSRNOP00000025409.4"/>
    <property type="gene ID" value="ENSRNOG00000018780.7"/>
</dbReference>
<dbReference type="GeneID" id="307472"/>
<dbReference type="KEGG" id="rno:307472"/>
<dbReference type="UCSC" id="RGD:1308415">
    <property type="organism name" value="rat"/>
</dbReference>
<dbReference type="AGR" id="RGD:1308415"/>
<dbReference type="CTD" id="153769"/>
<dbReference type="RGD" id="1308415">
    <property type="gene designation" value="Sh3rf2"/>
</dbReference>
<dbReference type="eggNOG" id="KOG2177">
    <property type="taxonomic scope" value="Eukaryota"/>
</dbReference>
<dbReference type="GeneTree" id="ENSGT00940000160067"/>
<dbReference type="HOGENOM" id="CLU_015769_2_0_1"/>
<dbReference type="InParanoid" id="Q498M5"/>
<dbReference type="OMA" id="TGIFHNT"/>
<dbReference type="OrthoDB" id="2163411at2759"/>
<dbReference type="PhylomeDB" id="Q498M5"/>
<dbReference type="TreeFam" id="TF105571"/>
<dbReference type="UniPathway" id="UPA00143"/>
<dbReference type="PRO" id="PR:Q498M5"/>
<dbReference type="Proteomes" id="UP000002494">
    <property type="component" value="Chromosome 18"/>
</dbReference>
<dbReference type="Bgee" id="ENSRNOG00000018780">
    <property type="expression patterns" value="Expressed in testis and 16 other cell types or tissues"/>
</dbReference>
<dbReference type="GO" id="GO:0005654">
    <property type="term" value="C:nucleoplasm"/>
    <property type="evidence" value="ECO:0000318"/>
    <property type="project" value="GO_Central"/>
</dbReference>
<dbReference type="GO" id="GO:0005634">
    <property type="term" value="C:nucleus"/>
    <property type="evidence" value="ECO:0000250"/>
    <property type="project" value="UniProtKB"/>
</dbReference>
<dbReference type="GO" id="GO:0019902">
    <property type="term" value="F:phosphatase binding"/>
    <property type="evidence" value="ECO:0000250"/>
    <property type="project" value="UniProtKB"/>
</dbReference>
<dbReference type="GO" id="GO:0008157">
    <property type="term" value="F:protein phosphatase 1 binding"/>
    <property type="evidence" value="ECO:0000250"/>
    <property type="project" value="UniProtKB"/>
</dbReference>
<dbReference type="GO" id="GO:0004864">
    <property type="term" value="F:protein phosphatase inhibitor activity"/>
    <property type="evidence" value="ECO:0007669"/>
    <property type="project" value="UniProtKB-KW"/>
</dbReference>
<dbReference type="GO" id="GO:0061630">
    <property type="term" value="F:ubiquitin protein ligase activity"/>
    <property type="evidence" value="ECO:0000250"/>
    <property type="project" value="UniProtKB"/>
</dbReference>
<dbReference type="GO" id="GO:0008270">
    <property type="term" value="F:zinc ion binding"/>
    <property type="evidence" value="ECO:0007669"/>
    <property type="project" value="UniProtKB-KW"/>
</dbReference>
<dbReference type="GO" id="GO:0043066">
    <property type="term" value="P:negative regulation of apoptotic process"/>
    <property type="evidence" value="ECO:0000315"/>
    <property type="project" value="UniProtKB"/>
</dbReference>
<dbReference type="GO" id="GO:0046329">
    <property type="term" value="P:negative regulation of JNK cascade"/>
    <property type="evidence" value="ECO:0000315"/>
    <property type="project" value="UniProtKB"/>
</dbReference>
<dbReference type="GO" id="GO:0031397">
    <property type="term" value="P:negative regulation of protein ubiquitination"/>
    <property type="evidence" value="ECO:0000266"/>
    <property type="project" value="RGD"/>
</dbReference>
<dbReference type="GO" id="GO:0030335">
    <property type="term" value="P:positive regulation of cell migration"/>
    <property type="evidence" value="ECO:0000250"/>
    <property type="project" value="UniProtKB"/>
</dbReference>
<dbReference type="GO" id="GO:0046330">
    <property type="term" value="P:positive regulation of JNK cascade"/>
    <property type="evidence" value="ECO:0000250"/>
    <property type="project" value="UniProtKB"/>
</dbReference>
<dbReference type="GO" id="GO:0032436">
    <property type="term" value="P:positive regulation of proteasomal ubiquitin-dependent protein catabolic process"/>
    <property type="evidence" value="ECO:0000315"/>
    <property type="project" value="UniProtKB"/>
</dbReference>
<dbReference type="GO" id="GO:0051865">
    <property type="term" value="P:protein autoubiquitination"/>
    <property type="evidence" value="ECO:0000250"/>
    <property type="project" value="UniProtKB"/>
</dbReference>
<dbReference type="GO" id="GO:0016567">
    <property type="term" value="P:protein ubiquitination"/>
    <property type="evidence" value="ECO:0000318"/>
    <property type="project" value="GO_Central"/>
</dbReference>
<dbReference type="CDD" id="cd16749">
    <property type="entry name" value="RING-HC_SH3RF2"/>
    <property type="match status" value="1"/>
</dbReference>
<dbReference type="CDD" id="cd11929">
    <property type="entry name" value="SH3_SH3RF2_1"/>
    <property type="match status" value="1"/>
</dbReference>
<dbReference type="CDD" id="cd11932">
    <property type="entry name" value="SH3_SH3RF2_2"/>
    <property type="match status" value="1"/>
</dbReference>
<dbReference type="CDD" id="cd11784">
    <property type="entry name" value="SH3_SH3RF2_3"/>
    <property type="match status" value="1"/>
</dbReference>
<dbReference type="FunFam" id="3.30.40.10:FF:000077">
    <property type="entry name" value="E3 ubiquitin-protein ligase SH3RF1 isoform X1"/>
    <property type="match status" value="1"/>
</dbReference>
<dbReference type="FunFam" id="2.30.30.40:FF:000173">
    <property type="entry name" value="E3 ubiquitin-protein ligase SH3RF2 isoform X1"/>
    <property type="match status" value="1"/>
</dbReference>
<dbReference type="FunFam" id="2.30.30.40:FF:000191">
    <property type="entry name" value="E3 ubiquitin-protein ligase SH3RF2 isoform X2"/>
    <property type="match status" value="1"/>
</dbReference>
<dbReference type="FunFam" id="2.30.30.40:FF:000063">
    <property type="entry name" value="Putative E3 ubiquitin-protein ligase SH3RF1"/>
    <property type="match status" value="1"/>
</dbReference>
<dbReference type="Gene3D" id="2.30.30.40">
    <property type="entry name" value="SH3 Domains"/>
    <property type="match status" value="3"/>
</dbReference>
<dbReference type="Gene3D" id="3.30.40.10">
    <property type="entry name" value="Zinc/RING finger domain, C3HC4 (zinc finger)"/>
    <property type="match status" value="1"/>
</dbReference>
<dbReference type="InterPro" id="IPR050384">
    <property type="entry name" value="Endophilin_SH3RF"/>
</dbReference>
<dbReference type="InterPro" id="IPR036028">
    <property type="entry name" value="SH3-like_dom_sf"/>
</dbReference>
<dbReference type="InterPro" id="IPR001452">
    <property type="entry name" value="SH3_domain"/>
</dbReference>
<dbReference type="InterPro" id="IPR028511">
    <property type="entry name" value="SH3RF2_RING-HC_Zfn"/>
</dbReference>
<dbReference type="InterPro" id="IPR035792">
    <property type="entry name" value="SH3RF2_SH3_1"/>
</dbReference>
<dbReference type="InterPro" id="IPR035794">
    <property type="entry name" value="SH3RF2_SH3_2"/>
</dbReference>
<dbReference type="InterPro" id="IPR035822">
    <property type="entry name" value="SH3RF2_SH3_3"/>
</dbReference>
<dbReference type="InterPro" id="IPR001841">
    <property type="entry name" value="Znf_RING"/>
</dbReference>
<dbReference type="InterPro" id="IPR013083">
    <property type="entry name" value="Znf_RING/FYVE/PHD"/>
</dbReference>
<dbReference type="InterPro" id="IPR017907">
    <property type="entry name" value="Znf_RING_CS"/>
</dbReference>
<dbReference type="PANTHER" id="PTHR14167:SF60">
    <property type="entry name" value="E3 UBIQUITIN-PROTEIN LIGASE SH3RF2"/>
    <property type="match status" value="1"/>
</dbReference>
<dbReference type="PANTHER" id="PTHR14167">
    <property type="entry name" value="SH3 DOMAIN-CONTAINING"/>
    <property type="match status" value="1"/>
</dbReference>
<dbReference type="Pfam" id="PF00018">
    <property type="entry name" value="SH3_1"/>
    <property type="match status" value="2"/>
</dbReference>
<dbReference type="Pfam" id="PF07653">
    <property type="entry name" value="SH3_2"/>
    <property type="match status" value="1"/>
</dbReference>
<dbReference type="Pfam" id="PF13639">
    <property type="entry name" value="zf-RING_2"/>
    <property type="match status" value="1"/>
</dbReference>
<dbReference type="PRINTS" id="PR00499">
    <property type="entry name" value="P67PHOX"/>
</dbReference>
<dbReference type="PRINTS" id="PR00452">
    <property type="entry name" value="SH3DOMAIN"/>
</dbReference>
<dbReference type="SMART" id="SM00184">
    <property type="entry name" value="RING"/>
    <property type="match status" value="1"/>
</dbReference>
<dbReference type="SMART" id="SM00326">
    <property type="entry name" value="SH3"/>
    <property type="match status" value="3"/>
</dbReference>
<dbReference type="SUPFAM" id="SSF57850">
    <property type="entry name" value="RING/U-box"/>
    <property type="match status" value="1"/>
</dbReference>
<dbReference type="SUPFAM" id="SSF50044">
    <property type="entry name" value="SH3-domain"/>
    <property type="match status" value="3"/>
</dbReference>
<dbReference type="PROSITE" id="PS50002">
    <property type="entry name" value="SH3"/>
    <property type="match status" value="3"/>
</dbReference>
<dbReference type="PROSITE" id="PS00518">
    <property type="entry name" value="ZF_RING_1"/>
    <property type="match status" value="1"/>
</dbReference>
<dbReference type="PROSITE" id="PS50089">
    <property type="entry name" value="ZF_RING_2"/>
    <property type="match status" value="1"/>
</dbReference>
<name>SH3R2_RAT</name>
<organism>
    <name type="scientific">Rattus norvegicus</name>
    <name type="common">Rat</name>
    <dbReference type="NCBI Taxonomy" id="10116"/>
    <lineage>
        <taxon>Eukaryota</taxon>
        <taxon>Metazoa</taxon>
        <taxon>Chordata</taxon>
        <taxon>Craniata</taxon>
        <taxon>Vertebrata</taxon>
        <taxon>Euteleostomi</taxon>
        <taxon>Mammalia</taxon>
        <taxon>Eutheria</taxon>
        <taxon>Euarchontoglires</taxon>
        <taxon>Glires</taxon>
        <taxon>Rodentia</taxon>
        <taxon>Myomorpha</taxon>
        <taxon>Muroidea</taxon>
        <taxon>Muridae</taxon>
        <taxon>Murinae</taxon>
        <taxon>Rattus</taxon>
    </lineage>
</organism>
<comment type="function">
    <text evidence="2 6">Has E3 ubiquitin-protein ligase activity. Acts as an anti-apoptotic regulator of the JNK pathway by ubiquitinating and promoting the degradation of SH3RF1, a scaffold protein that is required for pro-apoptotic JNK activation (PubMed:22128169). Facilitates TNF-alpha-mediated recruitment of adapter proteins TRADD and RIPK1 to TNFRSF1A and regulates PAK4 protein stability via inhibition of its ubiquitin-mediated proteasomal degradation. Inhibits PPP1CA phosphatase activity (By similarity).</text>
</comment>
<comment type="catalytic activity">
    <reaction evidence="2">
        <text>S-ubiquitinyl-[E2 ubiquitin-conjugating enzyme]-L-cysteine + [acceptor protein]-L-lysine = [E2 ubiquitin-conjugating enzyme]-L-cysteine + N(6)-ubiquitinyl-[acceptor protein]-L-lysine.</text>
        <dbReference type="EC" id="2.3.2.27"/>
    </reaction>
</comment>
<comment type="pathway">
    <text>Protein modification; protein ubiquitination.</text>
</comment>
<comment type="subunit">
    <text evidence="2 6">Interacts with FASLG and PPP1CA. Interacts with PAK4 and TNFRSF1A (By similarity). Interacts with DLK1, MAP3K10, MAPK8IP1/JIP1, MAPK8IP2/JIP2 and MAPK8IP3/JIP3. Interacts with RAC1 (both active GTP- or inactive GDP-bound forms) (PubMed:22128169).</text>
</comment>
<comment type="subcellular location">
    <subcellularLocation>
        <location evidence="2">Nucleus</location>
    </subcellularLocation>
</comment>
<comment type="domain">
    <text evidence="2">The RING finger domain is required for ubiquitin ligase activity and autoubiquitination.</text>
</comment>
<comment type="PTM">
    <text evidence="2">Autoubiquitinated.</text>
</comment>
<comment type="similarity">
    <text evidence="8">Belongs to the SH3RF family.</text>
</comment>
<evidence type="ECO:0000250" key="1"/>
<evidence type="ECO:0000250" key="2">
    <source>
        <dbReference type="UniProtKB" id="Q8TEC5"/>
    </source>
</evidence>
<evidence type="ECO:0000255" key="3">
    <source>
        <dbReference type="PROSITE-ProRule" id="PRU00175"/>
    </source>
</evidence>
<evidence type="ECO:0000255" key="4">
    <source>
        <dbReference type="PROSITE-ProRule" id="PRU00192"/>
    </source>
</evidence>
<evidence type="ECO:0000256" key="5">
    <source>
        <dbReference type="SAM" id="MobiDB-lite"/>
    </source>
</evidence>
<evidence type="ECO:0000269" key="6">
    <source>
    </source>
</evidence>
<evidence type="ECO:0000303" key="7">
    <source>
    </source>
</evidence>
<evidence type="ECO:0000305" key="8"/>
<evidence type="ECO:0007744" key="9">
    <source>
    </source>
</evidence>
<feature type="chain" id="PRO_0000269514" description="E3 ubiquitin-protein ligase SH3RF2">
    <location>
        <begin position="1"/>
        <end position="735"/>
    </location>
</feature>
<feature type="domain" description="SH3 1" evidence="4">
    <location>
        <begin position="125"/>
        <end position="184"/>
    </location>
</feature>
<feature type="domain" description="SH3 2" evidence="4">
    <location>
        <begin position="187"/>
        <end position="252"/>
    </location>
</feature>
<feature type="domain" description="SH3 3" evidence="4">
    <location>
        <begin position="383"/>
        <end position="444"/>
    </location>
</feature>
<feature type="zinc finger region" description="RING-type" evidence="3">
    <location>
        <begin position="12"/>
        <end position="53"/>
    </location>
</feature>
<feature type="region of interest" description="Disordered" evidence="5">
    <location>
        <begin position="260"/>
        <end position="301"/>
    </location>
</feature>
<feature type="region of interest" description="Disordered" evidence="5">
    <location>
        <begin position="335"/>
        <end position="373"/>
    </location>
</feature>
<feature type="region of interest" description="Interaction with PAK4" evidence="2">
    <location>
        <begin position="373"/>
        <end position="466"/>
    </location>
</feature>
<feature type="region of interest" description="Disordered" evidence="5">
    <location>
        <begin position="472"/>
        <end position="534"/>
    </location>
</feature>
<feature type="region of interest" description="Disordered" evidence="5">
    <location>
        <begin position="612"/>
        <end position="637"/>
    </location>
</feature>
<feature type="region of interest" description="Interaction with PPP1CA" evidence="1">
    <location>
        <begin position="647"/>
        <end position="652"/>
    </location>
</feature>
<feature type="region of interest" description="Disordered" evidence="5">
    <location>
        <begin position="649"/>
        <end position="735"/>
    </location>
</feature>
<feature type="compositionally biased region" description="Polar residues" evidence="5">
    <location>
        <begin position="273"/>
        <end position="289"/>
    </location>
</feature>
<feature type="compositionally biased region" description="Polar residues" evidence="5">
    <location>
        <begin position="523"/>
        <end position="534"/>
    </location>
</feature>
<feature type="compositionally biased region" description="Pro residues" evidence="5">
    <location>
        <begin position="617"/>
        <end position="627"/>
    </location>
</feature>
<feature type="compositionally biased region" description="Polar residues" evidence="5">
    <location>
        <begin position="715"/>
        <end position="735"/>
    </location>
</feature>
<feature type="modified residue" description="Phosphoserine" evidence="9">
    <location>
        <position position="655"/>
    </location>
</feature>
<sequence>MDDLTLLDLLECPVCFEKLDVTAKVLPCQHTFCKPCLQRIFKAHKELRCPECRTLVFCSIEALPANLLLVRLLDGVRSGHNSWRGGSFRRPRILTLQDNRKAKSSPRSLQASPFRLGPTVRIHMDGVPRAKALCNYRGKNPGDLKFNKGDVILLQRQLDENWYQGEINGVSGFFPASSVEVIKQLPQPPPLCRALYNFDLRDKDKSENQDCLTFLKDDVITVISRVDENWAEGKLGDKVGIFPILFVEPNLSARHLLEKSKGHQLSRTKHLSLMSSPSRGKATNTSTLRKSPGSRRKGSGQFAMTTALNTLNRMVHSPEGHQMVEISTPVLISSTSPSMLTQHGDRADFPASSAGQVSTSHPAPASPGHSTAMVSVPSSQQHLSTNMFVALHTYSAQGPEELDLKKGEGIRVLGKNQDGWLRGVSLVTGRTGIFPSDYVIPVFSSTARKTSSFPDSRHPTVCTTWALSTSSVSSQGSFSEGDPRQSGPFRSVFVPTAVNPPRSTSGPGTSGQGSLRKVRSSMRKNGSLQRPVQSGIPTFMVGSLRCSPAMVIRPQKFQFYQPQGMTPSPTPIMVEIGSKSISTGEPALTCINRGGKTRTHSAGNSIIMEGKETPIKSEPPPKPPASAPPSILVKPENSKNGIEKQVKTVRFQNYSPPPTKHSASGPTSGKHEQPATLKGSQPEAVSSEGEMTILFAHRSGCHSGQQTDLRRKSAFSKTTPPVSTASVSQTLFPSK</sequence>
<protein>
    <recommendedName>
        <fullName>E3 ubiquitin-protein ligase SH3RF2</fullName>
        <ecNumber evidence="2">2.3.2.27</ecNumber>
    </recommendedName>
    <alternativeName>
        <fullName evidence="7">POSH-eliminating RING protein</fullName>
    </alternativeName>
    <alternativeName>
        <fullName>Protein phosphatase 1 regulatory subunit 39</fullName>
    </alternativeName>
    <alternativeName>
        <fullName>RING finger protein 158</fullName>
    </alternativeName>
    <alternativeName>
        <fullName evidence="8">RING-type E3 ubiquitin transferase SH3RF2</fullName>
    </alternativeName>
    <alternativeName>
        <fullName>SH3 domain-containing RING finger protein 2</fullName>
    </alternativeName>
</protein>
<keyword id="KW-0479">Metal-binding</keyword>
<keyword id="KW-0539">Nucleus</keyword>
<keyword id="KW-0597">Phosphoprotein</keyword>
<keyword id="KW-0650">Protein phosphatase inhibitor</keyword>
<keyword id="KW-1185">Reference proteome</keyword>
<keyword id="KW-0677">Repeat</keyword>
<keyword id="KW-0728">SH3 domain</keyword>
<keyword id="KW-0808">Transferase</keyword>
<keyword id="KW-0832">Ubl conjugation</keyword>
<keyword id="KW-0833">Ubl conjugation pathway</keyword>
<keyword id="KW-0862">Zinc</keyword>
<keyword id="KW-0863">Zinc-finger</keyword>
<proteinExistence type="evidence at protein level"/>